<protein>
    <recommendedName>
        <fullName>Glutathione S-transferase T3</fullName>
        <shortName>AtGSTT3</shortName>
        <ecNumber>2.5.1.18</ecNumber>
    </recommendedName>
    <alternativeName>
        <fullName>GST class-theta member 3</fullName>
    </alternativeName>
    <alternativeName>
        <fullName>Glutathione S-transferase 10C</fullName>
    </alternativeName>
</protein>
<name>GSTT3_ARATH</name>
<proteinExistence type="evidence at transcript level"/>
<gene>
    <name type="primary">GSTT3</name>
    <name type="synonym">GST10C</name>
    <name type="ordered locus">At5g41220</name>
    <name type="ORF">K1O13.1</name>
</gene>
<organism>
    <name type="scientific">Arabidopsis thaliana</name>
    <name type="common">Mouse-ear cress</name>
    <dbReference type="NCBI Taxonomy" id="3702"/>
    <lineage>
        <taxon>Eukaryota</taxon>
        <taxon>Viridiplantae</taxon>
        <taxon>Streptophyta</taxon>
        <taxon>Embryophyta</taxon>
        <taxon>Tracheophyta</taxon>
        <taxon>Spermatophyta</taxon>
        <taxon>Magnoliopsida</taxon>
        <taxon>eudicotyledons</taxon>
        <taxon>Gunneridae</taxon>
        <taxon>Pentapetalae</taxon>
        <taxon>rosids</taxon>
        <taxon>malvids</taxon>
        <taxon>Brassicales</taxon>
        <taxon>Brassicaceae</taxon>
        <taxon>Camelineae</taxon>
        <taxon>Arabidopsis</taxon>
    </lineage>
</organism>
<comment type="function">
    <text evidence="1">May be involved in the conjugation of reduced glutathione to a wide number of exogenous and endogenous hydrophobic electrophiles and have a detoxification role against certain herbicides.</text>
</comment>
<comment type="catalytic activity">
    <reaction>
        <text>RX + glutathione = an S-substituted glutathione + a halide anion + H(+)</text>
        <dbReference type="Rhea" id="RHEA:16437"/>
        <dbReference type="ChEBI" id="CHEBI:15378"/>
        <dbReference type="ChEBI" id="CHEBI:16042"/>
        <dbReference type="ChEBI" id="CHEBI:17792"/>
        <dbReference type="ChEBI" id="CHEBI:57925"/>
        <dbReference type="ChEBI" id="CHEBI:90779"/>
        <dbReference type="EC" id="2.5.1.18"/>
    </reaction>
</comment>
<comment type="subcellular location">
    <subcellularLocation>
        <location evidence="4">Nucleus</location>
    </subcellularLocation>
</comment>
<comment type="similarity">
    <text evidence="5">Belongs to the GST superfamily. Theta family.</text>
</comment>
<feature type="chain" id="PRO_0000413576" description="Glutathione S-transferase T3">
    <location>
        <begin position="1"/>
        <end position="590"/>
    </location>
</feature>
<feature type="domain" description="GST N-terminal">
    <location>
        <begin position="1"/>
        <end position="82"/>
    </location>
</feature>
<feature type="domain" description="GST C-terminal">
    <location>
        <begin position="89"/>
        <end position="232"/>
    </location>
</feature>
<feature type="domain" description="Myb-like" evidence="2">
    <location>
        <begin position="265"/>
        <end position="336"/>
    </location>
</feature>
<feature type="region of interest" description="Disordered" evidence="3">
    <location>
        <begin position="402"/>
        <end position="427"/>
    </location>
</feature>
<feature type="binding site" evidence="1">
    <location>
        <begin position="11"/>
        <end position="12"/>
    </location>
    <ligand>
        <name>glutathione</name>
        <dbReference type="ChEBI" id="CHEBI:57925"/>
    </ligand>
</feature>
<feature type="binding site" evidence="1">
    <location>
        <begin position="40"/>
        <end position="41"/>
    </location>
    <ligand>
        <name>glutathione</name>
        <dbReference type="ChEBI" id="CHEBI:57925"/>
    </ligand>
</feature>
<feature type="binding site" evidence="1">
    <location>
        <begin position="53"/>
        <end position="54"/>
    </location>
    <ligand>
        <name>glutathione</name>
        <dbReference type="ChEBI" id="CHEBI:57925"/>
    </ligand>
</feature>
<feature type="binding site" evidence="1">
    <location>
        <begin position="66"/>
        <end position="67"/>
    </location>
    <ligand>
        <name>glutathione</name>
        <dbReference type="ChEBI" id="CHEBI:57925"/>
    </ligand>
</feature>
<dbReference type="EC" id="2.5.1.18"/>
<dbReference type="EMBL" id="AB019225">
    <property type="protein sequence ID" value="BAB11098.1"/>
    <property type="molecule type" value="Genomic_DNA"/>
</dbReference>
<dbReference type="EMBL" id="CP002688">
    <property type="protein sequence ID" value="AED94655.1"/>
    <property type="molecule type" value="Genomic_DNA"/>
</dbReference>
<dbReference type="EMBL" id="AK222098">
    <property type="protein sequence ID" value="BAD95009.1"/>
    <property type="molecule type" value="mRNA"/>
</dbReference>
<dbReference type="RefSeq" id="NP_198938.1">
    <property type="nucleotide sequence ID" value="NM_123487.4"/>
</dbReference>
<dbReference type="SMR" id="Q9FHE1"/>
<dbReference type="FunCoup" id="Q9FHE1">
    <property type="interactions" value="577"/>
</dbReference>
<dbReference type="STRING" id="3702.Q9FHE1"/>
<dbReference type="PaxDb" id="3702-AT5G41220.1"/>
<dbReference type="ProteomicsDB" id="247187"/>
<dbReference type="EnsemblPlants" id="AT5G41220.1">
    <property type="protein sequence ID" value="AT5G41220.1"/>
    <property type="gene ID" value="AT5G41220"/>
</dbReference>
<dbReference type="GeneID" id="834124"/>
<dbReference type="Gramene" id="AT5G41220.1">
    <property type="protein sequence ID" value="AT5G41220.1"/>
    <property type="gene ID" value="AT5G41220"/>
</dbReference>
<dbReference type="KEGG" id="ath:AT5G41220"/>
<dbReference type="Araport" id="AT5G41220"/>
<dbReference type="TAIR" id="AT5G41220">
    <property type="gene designation" value="GSTT3"/>
</dbReference>
<dbReference type="eggNOG" id="KOG0867">
    <property type="taxonomic scope" value="Eukaryota"/>
</dbReference>
<dbReference type="HOGENOM" id="CLU_462617_0_0_1"/>
<dbReference type="InParanoid" id="Q9FHE1"/>
<dbReference type="PhylomeDB" id="Q9FHE1"/>
<dbReference type="BioCyc" id="ARA:AT5G41220-MONOMER"/>
<dbReference type="PRO" id="PR:Q9FHE1"/>
<dbReference type="Proteomes" id="UP000006548">
    <property type="component" value="Chromosome 5"/>
</dbReference>
<dbReference type="ExpressionAtlas" id="Q9FHE1">
    <property type="expression patterns" value="baseline and differential"/>
</dbReference>
<dbReference type="GO" id="GO:0005737">
    <property type="term" value="C:cytoplasm"/>
    <property type="evidence" value="ECO:0000303"/>
    <property type="project" value="TAIR"/>
</dbReference>
<dbReference type="GO" id="GO:0005634">
    <property type="term" value="C:nucleus"/>
    <property type="evidence" value="ECO:0007669"/>
    <property type="project" value="UniProtKB-SubCell"/>
</dbReference>
<dbReference type="GO" id="GO:0009536">
    <property type="term" value="C:plastid"/>
    <property type="evidence" value="ECO:0007005"/>
    <property type="project" value="TAIR"/>
</dbReference>
<dbReference type="GO" id="GO:0004364">
    <property type="term" value="F:glutathione transferase activity"/>
    <property type="evidence" value="ECO:0007669"/>
    <property type="project" value="UniProtKB-EC"/>
</dbReference>
<dbReference type="GO" id="GO:0009407">
    <property type="term" value="P:toxin catabolic process"/>
    <property type="evidence" value="ECO:0000304"/>
    <property type="project" value="TAIR"/>
</dbReference>
<dbReference type="CDD" id="cd03183">
    <property type="entry name" value="GST_C_Theta"/>
    <property type="match status" value="1"/>
</dbReference>
<dbReference type="CDD" id="cd03050">
    <property type="entry name" value="GST_N_Theta"/>
    <property type="match status" value="1"/>
</dbReference>
<dbReference type="FunFam" id="1.20.1050.10:FF:000039">
    <property type="entry name" value="Glutathione S-transferase theta-1"/>
    <property type="match status" value="1"/>
</dbReference>
<dbReference type="Gene3D" id="1.20.1050.10">
    <property type="match status" value="1"/>
</dbReference>
<dbReference type="Gene3D" id="3.40.30.10">
    <property type="entry name" value="Glutaredoxin"/>
    <property type="match status" value="1"/>
</dbReference>
<dbReference type="Gene3D" id="1.10.10.60">
    <property type="entry name" value="Homeodomain-like"/>
    <property type="match status" value="1"/>
</dbReference>
<dbReference type="InterPro" id="IPR010987">
    <property type="entry name" value="Glutathione-S-Trfase_C-like"/>
</dbReference>
<dbReference type="InterPro" id="IPR036282">
    <property type="entry name" value="Glutathione-S-Trfase_C_sf"/>
</dbReference>
<dbReference type="InterPro" id="IPR004045">
    <property type="entry name" value="Glutathione_S-Trfase_N"/>
</dbReference>
<dbReference type="InterPro" id="IPR040077">
    <property type="entry name" value="GST_C_Theta"/>
</dbReference>
<dbReference type="InterPro" id="IPR040075">
    <property type="entry name" value="GST_N_Theta"/>
</dbReference>
<dbReference type="InterPro" id="IPR043377">
    <property type="entry name" value="GSTT1/2/3"/>
</dbReference>
<dbReference type="InterPro" id="IPR001005">
    <property type="entry name" value="SANT/Myb"/>
</dbReference>
<dbReference type="InterPro" id="IPR036249">
    <property type="entry name" value="Thioredoxin-like_sf"/>
</dbReference>
<dbReference type="PANTHER" id="PTHR44750">
    <property type="entry name" value="GLUTATHIONE S-TRANSFERASE T1-RELATED"/>
    <property type="match status" value="1"/>
</dbReference>
<dbReference type="PANTHER" id="PTHR44750:SF1">
    <property type="entry name" value="GLUTATHIONE S-TRANSFERASE T1-RELATED"/>
    <property type="match status" value="1"/>
</dbReference>
<dbReference type="Pfam" id="PF02798">
    <property type="entry name" value="GST_N"/>
    <property type="match status" value="1"/>
</dbReference>
<dbReference type="SFLD" id="SFLDG01153">
    <property type="entry name" value="Main.4:_Theta-like"/>
    <property type="match status" value="1"/>
</dbReference>
<dbReference type="SFLD" id="SFLDG00358">
    <property type="entry name" value="Main_(cytGST)"/>
    <property type="match status" value="1"/>
</dbReference>
<dbReference type="SUPFAM" id="SSF47616">
    <property type="entry name" value="GST C-terminal domain-like"/>
    <property type="match status" value="1"/>
</dbReference>
<dbReference type="SUPFAM" id="SSF52833">
    <property type="entry name" value="Thioredoxin-like"/>
    <property type="match status" value="1"/>
</dbReference>
<dbReference type="PROSITE" id="PS50405">
    <property type="entry name" value="GST_CTER"/>
    <property type="match status" value="1"/>
</dbReference>
<dbReference type="PROSITE" id="PS50404">
    <property type="entry name" value="GST_NTER"/>
    <property type="match status" value="1"/>
</dbReference>
<dbReference type="PROSITE" id="PS50090">
    <property type="entry name" value="MYB_LIKE"/>
    <property type="match status" value="1"/>
</dbReference>
<sequence>MKLKVYADRMSQPSRAVLIFCKVNEIQFDEILIYLANRQQLSPEFKDINPMGKVPAIVDGKLKLSESHAILIYLSSAYPSVVDHWYPTDLSKRARIHSVLDWHHTNLRPGAAGYVLNSVLGPALGLPLNPKAAAEAEQLLTKSLTTLDTFWLKGNAMFLLGSNQPSIADLSLVCELTQLQVLDDKDRLRLLSPHKNVEQWIENTRKATMPHFDEVHEVLFRAKDRCQKQREMATASKPGPQSKIIQFSTIGEKSDDPNLVQNTTDRRKHRRKWSRAEDAILISAWLNTSKDPIVDNEHKACAFWKRIGAYFNNSASLANLPKREPSHCKQRWSKLNDKVCKFVGCYDQALNQRSSGQSEDDVFQVAYQVYTNNYKSNFTLEHAWRELRHSKKWCSLYPFENSKGGGSSKRTKLNNGDRVYSSSSNPESVPIALDEEEQVMDLPLGVKSSKQKEKKVATIITIEEREADSGSRLENLWVLDEEEQVMDRPLGVKSLEQKENKVAPKPTIEEREAADSRSRLENLWALKEKEEREADSRSRLENLWALKEKDIEEQKKLTRMEVLKSLLGRTTDQLSEKEDILKNKLIDEML</sequence>
<reference key="1">
    <citation type="journal article" date="2000" name="DNA Res.">
        <title>Structural analysis of Arabidopsis thaliana chromosome 5. X. Sequence features of the regions of 3,076,755 bp covered by sixty P1 and TAC clones.</title>
        <authorList>
            <person name="Sato S."/>
            <person name="Nakamura Y."/>
            <person name="Kaneko T."/>
            <person name="Katoh T."/>
            <person name="Asamizu E."/>
            <person name="Kotani H."/>
            <person name="Tabata S."/>
        </authorList>
    </citation>
    <scope>NUCLEOTIDE SEQUENCE [LARGE SCALE GENOMIC DNA]</scope>
    <source>
        <strain>cv. Columbia</strain>
    </source>
</reference>
<reference key="2">
    <citation type="journal article" date="2017" name="Plant J.">
        <title>Araport11: a complete reannotation of the Arabidopsis thaliana reference genome.</title>
        <authorList>
            <person name="Cheng C.Y."/>
            <person name="Krishnakumar V."/>
            <person name="Chan A.P."/>
            <person name="Thibaud-Nissen F."/>
            <person name="Schobel S."/>
            <person name="Town C.D."/>
        </authorList>
    </citation>
    <scope>GENOME REANNOTATION</scope>
    <source>
        <strain>cv. Columbia</strain>
    </source>
</reference>
<reference key="3">
    <citation type="submission" date="2005-03" db="EMBL/GenBank/DDBJ databases">
        <title>Large-scale analysis of RIKEN Arabidopsis full-length (RAFL) cDNAs.</title>
        <authorList>
            <person name="Totoki Y."/>
            <person name="Seki M."/>
            <person name="Ishida J."/>
            <person name="Nakajima M."/>
            <person name="Enju A."/>
            <person name="Kamiya A."/>
            <person name="Narusaka M."/>
            <person name="Shin-i T."/>
            <person name="Nakagawa M."/>
            <person name="Sakamoto N."/>
            <person name="Oishi K."/>
            <person name="Kohara Y."/>
            <person name="Kobayashi M."/>
            <person name="Toyoda A."/>
            <person name="Sakaki Y."/>
            <person name="Sakurai T."/>
            <person name="Iida K."/>
            <person name="Akiyama K."/>
            <person name="Satou M."/>
            <person name="Toyoda T."/>
            <person name="Konagaya A."/>
            <person name="Carninci P."/>
            <person name="Kawai J."/>
            <person name="Hayashizaki Y."/>
            <person name="Shinozaki K."/>
        </authorList>
    </citation>
    <scope>NUCLEOTIDE SEQUENCE [LARGE SCALE MRNA] OF 249-590</scope>
    <source>
        <strain>cv. Columbia</strain>
    </source>
</reference>
<reference key="4">
    <citation type="journal article" date="2009" name="J. Exp. Bot.">
        <title>Enzyme activities and subcellular localization of members of the Arabidopsis glutathione transferase superfamily.</title>
        <authorList>
            <person name="Dixon D.P."/>
            <person name="Hawkins T."/>
            <person name="Hussey P.J."/>
            <person name="Edwards R."/>
        </authorList>
    </citation>
    <scope>SUBCELLULAR LOCATION</scope>
</reference>
<reference key="5">
    <citation type="journal article" date="2002" name="Plant Mol. Biol.">
        <title>Probing the diversity of the Arabidopsis glutathione S-transferase gene family.</title>
        <authorList>
            <person name="Wagner U."/>
            <person name="Edwards R."/>
            <person name="Dixon D.P."/>
            <person name="Mauch F."/>
        </authorList>
    </citation>
    <scope>GENE FAMILY</scope>
    <scope>NOMENCLATURE</scope>
</reference>
<accession>Q9FHE1</accession>
<accession>Q56WE4</accession>
<evidence type="ECO:0000250" key="1"/>
<evidence type="ECO:0000255" key="2">
    <source>
        <dbReference type="PROSITE-ProRule" id="PRU00133"/>
    </source>
</evidence>
<evidence type="ECO:0000256" key="3">
    <source>
        <dbReference type="SAM" id="MobiDB-lite"/>
    </source>
</evidence>
<evidence type="ECO:0000269" key="4">
    <source>
    </source>
</evidence>
<evidence type="ECO:0000305" key="5"/>
<keyword id="KW-0216">Detoxification</keyword>
<keyword id="KW-0539">Nucleus</keyword>
<keyword id="KW-1185">Reference proteome</keyword>
<keyword id="KW-0808">Transferase</keyword>